<accession>P56455</accession>
<evidence type="ECO:0000250" key="1"/>
<evidence type="ECO:0000305" key="2"/>
<reference key="1">
    <citation type="journal article" date="1997" name="Nature">
        <title>The complete genome sequence of the gastric pathogen Helicobacter pylori.</title>
        <authorList>
            <person name="Tomb J.-F."/>
            <person name="White O."/>
            <person name="Kerlavage A.R."/>
            <person name="Clayton R.A."/>
            <person name="Sutton G.G."/>
            <person name="Fleischmann R.D."/>
            <person name="Ketchum K.A."/>
            <person name="Klenk H.-P."/>
            <person name="Gill S.R."/>
            <person name="Dougherty B.A."/>
            <person name="Nelson K.E."/>
            <person name="Quackenbush J."/>
            <person name="Zhou L."/>
            <person name="Kirkness E.F."/>
            <person name="Peterson S.N."/>
            <person name="Loftus B.J."/>
            <person name="Richardson D.L."/>
            <person name="Dodson R.J."/>
            <person name="Khalak H.G."/>
            <person name="Glodek A."/>
            <person name="McKenney K."/>
            <person name="FitzGerald L.M."/>
            <person name="Lee N."/>
            <person name="Adams M.D."/>
            <person name="Hickey E.K."/>
            <person name="Berg D.E."/>
            <person name="Gocayne J.D."/>
            <person name="Utterback T.R."/>
            <person name="Peterson J.D."/>
            <person name="Kelley J.M."/>
            <person name="Cotton M.D."/>
            <person name="Weidman J.F."/>
            <person name="Fujii C."/>
            <person name="Bowman C."/>
            <person name="Watthey L."/>
            <person name="Wallin E."/>
            <person name="Hayes W.S."/>
            <person name="Borodovsky M."/>
            <person name="Karp P.D."/>
            <person name="Smith H.O."/>
            <person name="Fraser C.M."/>
            <person name="Venter J.C."/>
        </authorList>
    </citation>
    <scope>NUCLEOTIDE SEQUENCE [LARGE SCALE GENOMIC DNA]</scope>
    <source>
        <strain>ATCC 700392 / 26695</strain>
    </source>
</reference>
<organism>
    <name type="scientific">Helicobacter pylori (strain ATCC 700392 / 26695)</name>
    <name type="common">Campylobacter pylori</name>
    <dbReference type="NCBI Taxonomy" id="85962"/>
    <lineage>
        <taxon>Bacteria</taxon>
        <taxon>Pseudomonadati</taxon>
        <taxon>Campylobacterota</taxon>
        <taxon>Epsilonproteobacteria</taxon>
        <taxon>Campylobacterales</taxon>
        <taxon>Helicobacteraceae</taxon>
        <taxon>Helicobacter</taxon>
    </lineage>
</organism>
<gene>
    <name type="primary">hisS</name>
    <name type="ordered locus">HP_1190</name>
</gene>
<comment type="catalytic activity">
    <reaction>
        <text>tRNA(His) + L-histidine + ATP = L-histidyl-tRNA(His) + AMP + diphosphate + H(+)</text>
        <dbReference type="Rhea" id="RHEA:17313"/>
        <dbReference type="Rhea" id="RHEA-COMP:9665"/>
        <dbReference type="Rhea" id="RHEA-COMP:9689"/>
        <dbReference type="ChEBI" id="CHEBI:15378"/>
        <dbReference type="ChEBI" id="CHEBI:30616"/>
        <dbReference type="ChEBI" id="CHEBI:33019"/>
        <dbReference type="ChEBI" id="CHEBI:57595"/>
        <dbReference type="ChEBI" id="CHEBI:78442"/>
        <dbReference type="ChEBI" id="CHEBI:78527"/>
        <dbReference type="ChEBI" id="CHEBI:456215"/>
        <dbReference type="EC" id="6.1.1.21"/>
    </reaction>
</comment>
<comment type="subunit">
    <text evidence="1">Homodimer.</text>
</comment>
<comment type="subcellular location">
    <subcellularLocation>
        <location evidence="1">Cytoplasm</location>
    </subcellularLocation>
</comment>
<comment type="similarity">
    <text evidence="2">Belongs to the class-II aminoacyl-tRNA synthetase family.</text>
</comment>
<feature type="chain" id="PRO_0000136174" description="Histidine--tRNA ligase">
    <location>
        <begin position="1"/>
        <end position="442"/>
    </location>
</feature>
<proteinExistence type="inferred from homology"/>
<dbReference type="EC" id="6.1.1.21"/>
<dbReference type="EMBL" id="AE000511">
    <property type="protein sequence ID" value="AAD08236.1"/>
    <property type="molecule type" value="Genomic_DNA"/>
</dbReference>
<dbReference type="PIR" id="F64668">
    <property type="entry name" value="F64668"/>
</dbReference>
<dbReference type="RefSeq" id="NP_207981.1">
    <property type="nucleotide sequence ID" value="NC_000915.1"/>
</dbReference>
<dbReference type="RefSeq" id="WP_000632518.1">
    <property type="nucleotide sequence ID" value="NC_018939.1"/>
</dbReference>
<dbReference type="SMR" id="P56455"/>
<dbReference type="FunCoup" id="P56455">
    <property type="interactions" value="341"/>
</dbReference>
<dbReference type="STRING" id="85962.HP_1190"/>
<dbReference type="PaxDb" id="85962-C694_06160"/>
<dbReference type="EnsemblBacteria" id="AAD08236">
    <property type="protein sequence ID" value="AAD08236"/>
    <property type="gene ID" value="HP_1190"/>
</dbReference>
<dbReference type="KEGG" id="heo:C694_06160"/>
<dbReference type="KEGG" id="hpy:HP_1190"/>
<dbReference type="PATRIC" id="fig|85962.47.peg.1280"/>
<dbReference type="eggNOG" id="COG0124">
    <property type="taxonomic scope" value="Bacteria"/>
</dbReference>
<dbReference type="InParanoid" id="P56455"/>
<dbReference type="OrthoDB" id="9800814at2"/>
<dbReference type="PhylomeDB" id="P56455"/>
<dbReference type="BRENDA" id="6.1.1.21">
    <property type="organism ID" value="2604"/>
</dbReference>
<dbReference type="Proteomes" id="UP000000429">
    <property type="component" value="Chromosome"/>
</dbReference>
<dbReference type="GO" id="GO:0005737">
    <property type="term" value="C:cytoplasm"/>
    <property type="evidence" value="ECO:0007669"/>
    <property type="project" value="UniProtKB-SubCell"/>
</dbReference>
<dbReference type="GO" id="GO:0005524">
    <property type="term" value="F:ATP binding"/>
    <property type="evidence" value="ECO:0007669"/>
    <property type="project" value="UniProtKB-UniRule"/>
</dbReference>
<dbReference type="GO" id="GO:0004821">
    <property type="term" value="F:histidine-tRNA ligase activity"/>
    <property type="evidence" value="ECO:0007669"/>
    <property type="project" value="UniProtKB-UniRule"/>
</dbReference>
<dbReference type="GO" id="GO:0006427">
    <property type="term" value="P:histidyl-tRNA aminoacylation"/>
    <property type="evidence" value="ECO:0007669"/>
    <property type="project" value="UniProtKB-UniRule"/>
</dbReference>
<dbReference type="CDD" id="cd00773">
    <property type="entry name" value="HisRS-like_core"/>
    <property type="match status" value="1"/>
</dbReference>
<dbReference type="CDD" id="cd00859">
    <property type="entry name" value="HisRS_anticodon"/>
    <property type="match status" value="1"/>
</dbReference>
<dbReference type="FunFam" id="3.30.930.10:FF:000152">
    <property type="entry name" value="Histidine--tRNA ligase"/>
    <property type="match status" value="1"/>
</dbReference>
<dbReference type="Gene3D" id="3.40.50.800">
    <property type="entry name" value="Anticodon-binding domain"/>
    <property type="match status" value="1"/>
</dbReference>
<dbReference type="Gene3D" id="3.30.930.10">
    <property type="entry name" value="Bira Bifunctional Protein, Domain 2"/>
    <property type="match status" value="1"/>
</dbReference>
<dbReference type="HAMAP" id="MF_00127">
    <property type="entry name" value="His_tRNA_synth"/>
    <property type="match status" value="1"/>
</dbReference>
<dbReference type="InterPro" id="IPR006195">
    <property type="entry name" value="aa-tRNA-synth_II"/>
</dbReference>
<dbReference type="InterPro" id="IPR045864">
    <property type="entry name" value="aa-tRNA-synth_II/BPL/LPL"/>
</dbReference>
<dbReference type="InterPro" id="IPR004154">
    <property type="entry name" value="Anticodon-bd"/>
</dbReference>
<dbReference type="InterPro" id="IPR036621">
    <property type="entry name" value="Anticodon-bd_dom_sf"/>
</dbReference>
<dbReference type="InterPro" id="IPR015807">
    <property type="entry name" value="His-tRNA-ligase"/>
</dbReference>
<dbReference type="InterPro" id="IPR041715">
    <property type="entry name" value="HisRS-like_core"/>
</dbReference>
<dbReference type="InterPro" id="IPR004516">
    <property type="entry name" value="HisRS/HisZ"/>
</dbReference>
<dbReference type="InterPro" id="IPR033656">
    <property type="entry name" value="HisRS_anticodon"/>
</dbReference>
<dbReference type="NCBIfam" id="TIGR00442">
    <property type="entry name" value="hisS"/>
    <property type="match status" value="1"/>
</dbReference>
<dbReference type="PANTHER" id="PTHR11476:SF7">
    <property type="entry name" value="HISTIDINE--TRNA LIGASE"/>
    <property type="match status" value="1"/>
</dbReference>
<dbReference type="PANTHER" id="PTHR11476">
    <property type="entry name" value="HISTIDYL-TRNA SYNTHETASE"/>
    <property type="match status" value="1"/>
</dbReference>
<dbReference type="Pfam" id="PF03129">
    <property type="entry name" value="HGTP_anticodon"/>
    <property type="match status" value="1"/>
</dbReference>
<dbReference type="Pfam" id="PF13393">
    <property type="entry name" value="tRNA-synt_His"/>
    <property type="match status" value="1"/>
</dbReference>
<dbReference type="PIRSF" id="PIRSF001549">
    <property type="entry name" value="His-tRNA_synth"/>
    <property type="match status" value="1"/>
</dbReference>
<dbReference type="SUPFAM" id="SSF52954">
    <property type="entry name" value="Class II aaRS ABD-related"/>
    <property type="match status" value="1"/>
</dbReference>
<dbReference type="SUPFAM" id="SSF55681">
    <property type="entry name" value="Class II aaRS and biotin synthetases"/>
    <property type="match status" value="1"/>
</dbReference>
<dbReference type="PROSITE" id="PS50862">
    <property type="entry name" value="AA_TRNA_LIGASE_II"/>
    <property type="match status" value="1"/>
</dbReference>
<name>SYH_HELPY</name>
<keyword id="KW-0030">Aminoacyl-tRNA synthetase</keyword>
<keyword id="KW-0067">ATP-binding</keyword>
<keyword id="KW-0963">Cytoplasm</keyword>
<keyword id="KW-0436">Ligase</keyword>
<keyword id="KW-0547">Nucleotide-binding</keyword>
<keyword id="KW-0648">Protein biosynthesis</keyword>
<keyword id="KW-1185">Reference proteome</keyword>
<sequence length="442" mass="50172">MITPKVLSGFKDRLPKDAIQKAQLLAKVSVVFQSFGFVPIETPHLEYAQTLLPDASSDIQKEIYRFKDHGDRDVALRFDLTVPLARFVSLHHQTLGMPFKRYAIGNVFRGERAQKGRYREFTQCDFDFIGSESLVCDAEIIQVIVASLKALDLEDFCVSINHRKILNGICEYFGISQVNEALRIVDKLEKIGLNGVEEELKKECGLNSNTIKELLELIQIKQNDLSHAEFFEKIAYLKDYNENLKKGIQDLERLYQLLGDLQISQNLYKIDFSIARGLGYYTGIVYETTLNEMKSLGSVCSGGRYDHLTKNFSKENLQGVGASIGIDRLIVALSEMQLLDERSTQAKVLIACMHEEYFSYANRLAESLRQSGIFSEVYPEAQKIKKPFSYANHKGHEFVAVIGEEEFKSETLSLKNMHSGMQLNCLSFLKALEIIGENDEDL</sequence>
<protein>
    <recommendedName>
        <fullName>Histidine--tRNA ligase</fullName>
        <ecNumber>6.1.1.21</ecNumber>
    </recommendedName>
    <alternativeName>
        <fullName>Histidyl-tRNA synthetase</fullName>
        <shortName>HisRS</shortName>
    </alternativeName>
</protein>